<evidence type="ECO:0000250" key="1"/>
<evidence type="ECO:0000255" key="2">
    <source>
        <dbReference type="PROSITE-ProRule" id="PRU00147"/>
    </source>
</evidence>
<evidence type="ECO:0000269" key="3">
    <source>
    </source>
</evidence>
<evidence type="ECO:0000303" key="4">
    <source ref="2"/>
</evidence>
<evidence type="ECO:0000305" key="5"/>
<feature type="chain" id="PRO_0000423047" description="Sorting nexin-10A">
    <location>
        <begin position="1"/>
        <end position="229"/>
    </location>
</feature>
<feature type="domain" description="PX" evidence="2">
    <location>
        <begin position="11"/>
        <end position="128"/>
    </location>
</feature>
<feature type="binding site" evidence="1">
    <location>
        <position position="54"/>
    </location>
    <ligand>
        <name>a 1,2-diacyl-sn-glycero-3-phospho-(1D-myo-inositol-3-phosphate)</name>
        <dbReference type="ChEBI" id="CHEBI:58088"/>
    </ligand>
</feature>
<feature type="binding site" evidence="1">
    <location>
        <position position="95"/>
    </location>
    <ligand>
        <name>a 1,2-diacyl-sn-glycero-3-phospho-(1D-myo-inositol-3-phosphate)</name>
        <dbReference type="ChEBI" id="CHEBI:58088"/>
    </ligand>
</feature>
<feature type="splice variant" id="VSP_047511" description="In isoform 2." evidence="4">
    <location>
        <begin position="1"/>
        <end position="41"/>
    </location>
</feature>
<feature type="splice variant" id="VSP_047512" description="In isoform 2." evidence="4">
    <original>STTSSGLGCSIEP</original>
    <variation>RCVPASLYVLWIM</variation>
    <location>
        <begin position="176"/>
        <end position="188"/>
    </location>
</feature>
<feature type="splice variant" id="VSP_047513" description="In isoform 2." evidence="4">
    <location>
        <begin position="189"/>
        <end position="229"/>
    </location>
</feature>
<organism>
    <name type="scientific">Danio rerio</name>
    <name type="common">Zebrafish</name>
    <name type="synonym">Brachydanio rerio</name>
    <dbReference type="NCBI Taxonomy" id="7955"/>
    <lineage>
        <taxon>Eukaryota</taxon>
        <taxon>Metazoa</taxon>
        <taxon>Chordata</taxon>
        <taxon>Craniata</taxon>
        <taxon>Vertebrata</taxon>
        <taxon>Euteleostomi</taxon>
        <taxon>Actinopterygii</taxon>
        <taxon>Neopterygii</taxon>
        <taxon>Teleostei</taxon>
        <taxon>Ostariophysi</taxon>
        <taxon>Cypriniformes</taxon>
        <taxon>Danionidae</taxon>
        <taxon>Danioninae</taxon>
        <taxon>Danio</taxon>
    </lineage>
</organism>
<reference key="1">
    <citation type="journal article" date="2013" name="Nature">
        <title>The zebrafish reference genome sequence and its relationship to the human genome.</title>
        <authorList>
            <person name="Howe K."/>
            <person name="Clark M.D."/>
            <person name="Torroja C.F."/>
            <person name="Torrance J."/>
            <person name="Berthelot C."/>
            <person name="Muffato M."/>
            <person name="Collins J.E."/>
            <person name="Humphray S."/>
            <person name="McLaren K."/>
            <person name="Matthews L."/>
            <person name="McLaren S."/>
            <person name="Sealy I."/>
            <person name="Caccamo M."/>
            <person name="Churcher C."/>
            <person name="Scott C."/>
            <person name="Barrett J.C."/>
            <person name="Koch R."/>
            <person name="Rauch G.J."/>
            <person name="White S."/>
            <person name="Chow W."/>
            <person name="Kilian B."/>
            <person name="Quintais L.T."/>
            <person name="Guerra-Assuncao J.A."/>
            <person name="Zhou Y."/>
            <person name="Gu Y."/>
            <person name="Yen J."/>
            <person name="Vogel J.H."/>
            <person name="Eyre T."/>
            <person name="Redmond S."/>
            <person name="Banerjee R."/>
            <person name="Chi J."/>
            <person name="Fu B."/>
            <person name="Langley E."/>
            <person name="Maguire S.F."/>
            <person name="Laird G.K."/>
            <person name="Lloyd D."/>
            <person name="Kenyon E."/>
            <person name="Donaldson S."/>
            <person name="Sehra H."/>
            <person name="Almeida-King J."/>
            <person name="Loveland J."/>
            <person name="Trevanion S."/>
            <person name="Jones M."/>
            <person name="Quail M."/>
            <person name="Willey D."/>
            <person name="Hunt A."/>
            <person name="Burton J."/>
            <person name="Sims S."/>
            <person name="McLay K."/>
            <person name="Plumb B."/>
            <person name="Davis J."/>
            <person name="Clee C."/>
            <person name="Oliver K."/>
            <person name="Clark R."/>
            <person name="Riddle C."/>
            <person name="Elliot D."/>
            <person name="Threadgold G."/>
            <person name="Harden G."/>
            <person name="Ware D."/>
            <person name="Begum S."/>
            <person name="Mortimore B."/>
            <person name="Kerry G."/>
            <person name="Heath P."/>
            <person name="Phillimore B."/>
            <person name="Tracey A."/>
            <person name="Corby N."/>
            <person name="Dunn M."/>
            <person name="Johnson C."/>
            <person name="Wood J."/>
            <person name="Clark S."/>
            <person name="Pelan S."/>
            <person name="Griffiths G."/>
            <person name="Smith M."/>
            <person name="Glithero R."/>
            <person name="Howden P."/>
            <person name="Barker N."/>
            <person name="Lloyd C."/>
            <person name="Stevens C."/>
            <person name="Harley J."/>
            <person name="Holt K."/>
            <person name="Panagiotidis G."/>
            <person name="Lovell J."/>
            <person name="Beasley H."/>
            <person name="Henderson C."/>
            <person name="Gordon D."/>
            <person name="Auger K."/>
            <person name="Wright D."/>
            <person name="Collins J."/>
            <person name="Raisen C."/>
            <person name="Dyer L."/>
            <person name="Leung K."/>
            <person name="Robertson L."/>
            <person name="Ambridge K."/>
            <person name="Leongamornlert D."/>
            <person name="McGuire S."/>
            <person name="Gilderthorp R."/>
            <person name="Griffiths C."/>
            <person name="Manthravadi D."/>
            <person name="Nichol S."/>
            <person name="Barker G."/>
            <person name="Whitehead S."/>
            <person name="Kay M."/>
            <person name="Brown J."/>
            <person name="Murnane C."/>
            <person name="Gray E."/>
            <person name="Humphries M."/>
            <person name="Sycamore N."/>
            <person name="Barker D."/>
            <person name="Saunders D."/>
            <person name="Wallis J."/>
            <person name="Babbage A."/>
            <person name="Hammond S."/>
            <person name="Mashreghi-Mohammadi M."/>
            <person name="Barr L."/>
            <person name="Martin S."/>
            <person name="Wray P."/>
            <person name="Ellington A."/>
            <person name="Matthews N."/>
            <person name="Ellwood M."/>
            <person name="Woodmansey R."/>
            <person name="Clark G."/>
            <person name="Cooper J."/>
            <person name="Tromans A."/>
            <person name="Grafham D."/>
            <person name="Skuce C."/>
            <person name="Pandian R."/>
            <person name="Andrews R."/>
            <person name="Harrison E."/>
            <person name="Kimberley A."/>
            <person name="Garnett J."/>
            <person name="Fosker N."/>
            <person name="Hall R."/>
            <person name="Garner P."/>
            <person name="Kelly D."/>
            <person name="Bird C."/>
            <person name="Palmer S."/>
            <person name="Gehring I."/>
            <person name="Berger A."/>
            <person name="Dooley C.M."/>
            <person name="Ersan-Urun Z."/>
            <person name="Eser C."/>
            <person name="Geiger H."/>
            <person name="Geisler M."/>
            <person name="Karotki L."/>
            <person name="Kirn A."/>
            <person name="Konantz J."/>
            <person name="Konantz M."/>
            <person name="Oberlander M."/>
            <person name="Rudolph-Geiger S."/>
            <person name="Teucke M."/>
            <person name="Lanz C."/>
            <person name="Raddatz G."/>
            <person name="Osoegawa K."/>
            <person name="Zhu B."/>
            <person name="Rapp A."/>
            <person name="Widaa S."/>
            <person name="Langford C."/>
            <person name="Yang F."/>
            <person name="Schuster S.C."/>
            <person name="Carter N.P."/>
            <person name="Harrow J."/>
            <person name="Ning Z."/>
            <person name="Herrero J."/>
            <person name="Searle S.M."/>
            <person name="Enright A."/>
            <person name="Geisler R."/>
            <person name="Plasterk R.H."/>
            <person name="Lee C."/>
            <person name="Westerfield M."/>
            <person name="de Jong P.J."/>
            <person name="Zon L.I."/>
            <person name="Postlethwait J.H."/>
            <person name="Nusslein-Volhard C."/>
            <person name="Hubbard T.J."/>
            <person name="Roest Crollius H."/>
            <person name="Rogers J."/>
            <person name="Stemple D.L."/>
        </authorList>
    </citation>
    <scope>NUCLEOTIDE SEQUENCE [LARGE SCALE GENOMIC DNA]</scope>
    <source>
        <strain>Tuebingen</strain>
    </source>
</reference>
<reference key="2">
    <citation type="submission" date="2003-08" db="EMBL/GenBank/DDBJ databases">
        <authorList>
            <consortium name="NIH - Zebrafish Gene Collection (ZGC) project"/>
        </authorList>
    </citation>
    <scope>NUCLEOTIDE SEQUENCE [LARGE SCALE MRNA] (ISOFORM 2)</scope>
</reference>
<reference key="3">
    <citation type="journal article" date="2012" name="Cell Res.">
        <title>A SNX10/V-ATPase pathway regulates ciliogenesis in vitro and in vivo.</title>
        <authorList>
            <person name="Chen Y."/>
            <person name="Wu B."/>
            <person name="Xu L."/>
            <person name="Li H."/>
            <person name="Xia J."/>
            <person name="Yin W."/>
            <person name="Li Z."/>
            <person name="Shi D."/>
            <person name="Li S."/>
            <person name="Lin S."/>
            <person name="Shu X."/>
            <person name="Pei D."/>
        </authorList>
    </citation>
    <scope>FUNCTION IN CILIOGENESIS</scope>
    <scope>DEVELOPMENTAL STAGE</scope>
</reference>
<comment type="function">
    <text evidence="3">Probable phosphoinositide-binding protein involved in protein sorting and membrane trafficking in endosomes. May play a role in cilium biogenesis through regulation of the transport and the localization of proteins to the cilium.</text>
</comment>
<comment type="subcellular location">
    <subcellularLocation>
        <location evidence="1">Cytoplasm</location>
    </subcellularLocation>
    <subcellularLocation>
        <location evidence="1">Endosome membrane</location>
        <topology evidence="1">Peripheral membrane protein</topology>
        <orientation evidence="1">Cytoplasmic side</orientation>
    </subcellularLocation>
    <subcellularLocation>
        <location evidence="1">Cytoplasm</location>
        <location evidence="1">Cytoskeleton</location>
        <location evidence="1">Microtubule organizing center</location>
        <location evidence="1">Centrosome</location>
    </subcellularLocation>
</comment>
<comment type="alternative products">
    <event type="alternative splicing"/>
    <isoform>
        <id>F1Q506-1</id>
        <name>1</name>
        <sequence type="displayed"/>
    </isoform>
    <isoform>
        <id>F1Q506-2</id>
        <name>2</name>
        <sequence type="described" ref="VSP_047511 VSP_047512 VSP_047513"/>
    </isoform>
</comment>
<comment type="developmental stage">
    <text evidence="3">Expressed in 10-somite stage embryos but not spatially restricted.</text>
</comment>
<comment type="domain">
    <text evidence="1">The PX domain mediates interaction with membranes enriched in phosphatidylinositol 3-phosphate.</text>
</comment>
<comment type="similarity">
    <text evidence="5">Belongs to the sorting nexin family.</text>
</comment>
<comment type="sequence caution" evidence="5">
    <conflict type="erroneous initiation">
        <sequence resource="EMBL-CDS" id="AAH55622"/>
    </conflict>
    <text>Extended N-terminus.</text>
</comment>
<dbReference type="EMBL" id="CABZ01083873">
    <property type="status" value="NOT_ANNOTATED_CDS"/>
    <property type="molecule type" value="Genomic_DNA"/>
</dbReference>
<dbReference type="EMBL" id="CABZ01083874">
    <property type="status" value="NOT_ANNOTATED_CDS"/>
    <property type="molecule type" value="Genomic_DNA"/>
</dbReference>
<dbReference type="EMBL" id="BC055622">
    <property type="protein sequence ID" value="AAH55622.1"/>
    <property type="status" value="ALT_INIT"/>
    <property type="molecule type" value="mRNA"/>
</dbReference>
<dbReference type="RefSeq" id="NP_001132934.1">
    <molecule id="F1Q506-1"/>
    <property type="nucleotide sequence ID" value="NM_001139462.1"/>
</dbReference>
<dbReference type="RefSeq" id="XP_021323707.1">
    <molecule id="F1Q506-1"/>
    <property type="nucleotide sequence ID" value="XM_021468032.2"/>
</dbReference>
<dbReference type="SMR" id="F1Q506"/>
<dbReference type="FunCoup" id="F1Q506">
    <property type="interactions" value="824"/>
</dbReference>
<dbReference type="STRING" id="7955.ENSDARP00000150398"/>
<dbReference type="PaxDb" id="7955-ENSDARP00000098673"/>
<dbReference type="Ensembl" id="ENSDART00000022803">
    <molecule id="F1Q506-1"/>
    <property type="protein sequence ID" value="ENSDARP00000025688"/>
    <property type="gene ID" value="ENSDARG00000004405"/>
</dbReference>
<dbReference type="Ensembl" id="ENSDART00000108627">
    <molecule id="F1Q506-1"/>
    <property type="protein sequence ID" value="ENSDARP00000098673"/>
    <property type="gene ID" value="ENSDARG00000004405"/>
</dbReference>
<dbReference type="Ensembl" id="ENSDART00000190659">
    <molecule id="F1Q506-1"/>
    <property type="protein sequence ID" value="ENSDARP00000150398"/>
    <property type="gene ID" value="ENSDARG00000004405"/>
</dbReference>
<dbReference type="GeneID" id="403027"/>
<dbReference type="KEGG" id="dre:403027"/>
<dbReference type="AGR" id="ZFIN:ZDB-GENE-050809-44"/>
<dbReference type="CTD" id="403027"/>
<dbReference type="ZFIN" id="ZDB-GENE-050809-44">
    <property type="gene designation" value="snx10a"/>
</dbReference>
<dbReference type="eggNOG" id="KOG2527">
    <property type="taxonomic scope" value="Eukaryota"/>
</dbReference>
<dbReference type="InParanoid" id="F1Q506"/>
<dbReference type="OMA" id="SMLMVQL"/>
<dbReference type="OrthoDB" id="5227681at2759"/>
<dbReference type="PhylomeDB" id="F1Q506"/>
<dbReference type="TreeFam" id="TF332117"/>
<dbReference type="PRO" id="PR:F1Q506"/>
<dbReference type="Proteomes" id="UP000000437">
    <property type="component" value="Chromosome 19"/>
</dbReference>
<dbReference type="Bgee" id="ENSDARG00000004405">
    <property type="expression patterns" value="Expressed in cleaving embryo and 26 other cell types or tissues"/>
</dbReference>
<dbReference type="GO" id="GO:0005813">
    <property type="term" value="C:centrosome"/>
    <property type="evidence" value="ECO:0007669"/>
    <property type="project" value="UniProtKB-SubCell"/>
</dbReference>
<dbReference type="GO" id="GO:0005768">
    <property type="term" value="C:endosome"/>
    <property type="evidence" value="ECO:0000318"/>
    <property type="project" value="GO_Central"/>
</dbReference>
<dbReference type="GO" id="GO:0010008">
    <property type="term" value="C:endosome membrane"/>
    <property type="evidence" value="ECO:0007669"/>
    <property type="project" value="UniProtKB-SubCell"/>
</dbReference>
<dbReference type="GO" id="GO:1901981">
    <property type="term" value="F:phosphatidylinositol phosphate binding"/>
    <property type="evidence" value="ECO:0000318"/>
    <property type="project" value="GO_Central"/>
</dbReference>
<dbReference type="GO" id="GO:0060271">
    <property type="term" value="P:cilium assembly"/>
    <property type="evidence" value="ECO:0000315"/>
    <property type="project" value="UniProtKB"/>
</dbReference>
<dbReference type="GO" id="GO:0001947">
    <property type="term" value="P:heart looping"/>
    <property type="evidence" value="ECO:0000315"/>
    <property type="project" value="ZFIN"/>
</dbReference>
<dbReference type="GO" id="GO:0006886">
    <property type="term" value="P:intracellular protein transport"/>
    <property type="evidence" value="ECO:0007669"/>
    <property type="project" value="InterPro"/>
</dbReference>
<dbReference type="GO" id="GO:0070121">
    <property type="term" value="P:Kupffer's vesicle development"/>
    <property type="evidence" value="ECO:0000315"/>
    <property type="project" value="UniProtKB"/>
</dbReference>
<dbReference type="GO" id="GO:0070986">
    <property type="term" value="P:left/right axis specification"/>
    <property type="evidence" value="ECO:0000315"/>
    <property type="project" value="UniProtKB"/>
</dbReference>
<dbReference type="GO" id="GO:0071539">
    <property type="term" value="P:protein localization to centrosome"/>
    <property type="evidence" value="ECO:0000250"/>
    <property type="project" value="UniProtKB"/>
</dbReference>
<dbReference type="GO" id="GO:0061512">
    <property type="term" value="P:protein localization to cilium"/>
    <property type="evidence" value="ECO:0000250"/>
    <property type="project" value="UniProtKB"/>
</dbReference>
<dbReference type="GO" id="GO:0016050">
    <property type="term" value="P:vesicle organization"/>
    <property type="evidence" value="ECO:0000318"/>
    <property type="project" value="GO_Central"/>
</dbReference>
<dbReference type="CDD" id="cd06898">
    <property type="entry name" value="PX_SNX10"/>
    <property type="match status" value="1"/>
</dbReference>
<dbReference type="FunFam" id="3.30.1520.10:FF:000012">
    <property type="entry name" value="Sorting nexin 10"/>
    <property type="match status" value="1"/>
</dbReference>
<dbReference type="Gene3D" id="3.30.1520.10">
    <property type="entry name" value="Phox-like domain"/>
    <property type="match status" value="1"/>
</dbReference>
<dbReference type="InterPro" id="IPR001683">
    <property type="entry name" value="PX_dom"/>
</dbReference>
<dbReference type="InterPro" id="IPR036871">
    <property type="entry name" value="PX_dom_sf"/>
</dbReference>
<dbReference type="InterPro" id="IPR043544">
    <property type="entry name" value="SNX10/11"/>
</dbReference>
<dbReference type="PANTHER" id="PTHR46209">
    <property type="entry name" value="PX DOMAIN-CONTAINING PROTEIN"/>
    <property type="match status" value="1"/>
</dbReference>
<dbReference type="PANTHER" id="PTHR46209:SF2">
    <property type="entry name" value="SORTING NEXIN-10"/>
    <property type="match status" value="1"/>
</dbReference>
<dbReference type="Pfam" id="PF00787">
    <property type="entry name" value="PX"/>
    <property type="match status" value="1"/>
</dbReference>
<dbReference type="SMART" id="SM00312">
    <property type="entry name" value="PX"/>
    <property type="match status" value="1"/>
</dbReference>
<dbReference type="SUPFAM" id="SSF64268">
    <property type="entry name" value="PX domain"/>
    <property type="match status" value="1"/>
</dbReference>
<dbReference type="PROSITE" id="PS50195">
    <property type="entry name" value="PX"/>
    <property type="match status" value="1"/>
</dbReference>
<keyword id="KW-0025">Alternative splicing</keyword>
<keyword id="KW-0970">Cilium biogenesis/degradation</keyword>
<keyword id="KW-0963">Cytoplasm</keyword>
<keyword id="KW-0206">Cytoskeleton</keyword>
<keyword id="KW-0967">Endosome</keyword>
<keyword id="KW-0446">Lipid-binding</keyword>
<keyword id="KW-0472">Membrane</keyword>
<keyword id="KW-0653">Protein transport</keyword>
<keyword id="KW-1185">Reference proteome</keyword>
<keyword id="KW-0813">Transport</keyword>
<sequence>MDNTSFEKREFISVWVRDPQVHKEDFWHTYISYEICLHTNSMCFRKKTSCVRRRYSEFVWLRHKLQDNALLIELPKLPPWNPFFNLNNEFHITQRMQGLQQFLEAVLQTPLLLSDSRLHLFLQSQLSIAKMDACAQGHTHYTVAQAIQRCGGEARFPVEEQHQEDSKTCCDSDCDSTTSSGLGCSIEPATLVEQDLSHNERFAHEFQATNPEAELCSSLSSSPHGHSVI</sequence>
<gene>
    <name type="primary">snx10a</name>
    <name type="ORF">im:7153949</name>
</gene>
<proteinExistence type="evidence at protein level"/>
<protein>
    <recommendedName>
        <fullName>Sorting nexin-10A</fullName>
    </recommendedName>
</protein>
<accession>F1Q506</accession>
<accession>Q7SXF9</accession>
<name>SNXAA_DANRE</name>